<comment type="similarity">
    <text evidence="2">Belongs to the UPF0758 family.</text>
</comment>
<sequence length="224" mass="24392">MAITDWPEDERPREKLLARGAQALSDAELLAIFLRTGQQGLTAVDLARRQLVSSGGLRAMLDLSPERMAHLPGMGVARRALLLAALELGRRYLAEPLERGLPLDNPDKAGQLLTAQLRGLPFEVFACLFLDNKHRLIAFEKLFQGTIDAAAVYPREVVRRAMEHNAAAVILAHNHPSGVAEPSQSDHAITRRLVEALGLVEVRVLDHLVIGDGGWVSLASRGAV</sequence>
<reference key="1">
    <citation type="journal article" date="2006" name="Nat. Biotechnol.">
        <title>Genome sequence of the ubiquitous hydrocarbon-degrading marine bacterium Alcanivorax borkumensis.</title>
        <authorList>
            <person name="Schneiker S."/>
            <person name="Martins dos Santos V.A.P."/>
            <person name="Bartels D."/>
            <person name="Bekel T."/>
            <person name="Brecht M."/>
            <person name="Buhrmester J."/>
            <person name="Chernikova T.N."/>
            <person name="Denaro R."/>
            <person name="Ferrer M."/>
            <person name="Gertler C."/>
            <person name="Goesmann A."/>
            <person name="Golyshina O.V."/>
            <person name="Kaminski F."/>
            <person name="Khachane A.N."/>
            <person name="Lang S."/>
            <person name="Linke B."/>
            <person name="McHardy A.C."/>
            <person name="Meyer F."/>
            <person name="Nechitaylo T."/>
            <person name="Puehler A."/>
            <person name="Regenhardt D."/>
            <person name="Rupp O."/>
            <person name="Sabirova J.S."/>
            <person name="Selbitschka W."/>
            <person name="Yakimov M.M."/>
            <person name="Timmis K.N."/>
            <person name="Vorhoelter F.-J."/>
            <person name="Weidner S."/>
            <person name="Kaiser O."/>
            <person name="Golyshin P.N."/>
        </authorList>
    </citation>
    <scope>NUCLEOTIDE SEQUENCE [LARGE SCALE GENOMIC DNA]</scope>
    <source>
        <strain>ATCC 700651 / DSM 11573 / NCIMB 13689 / SK2</strain>
    </source>
</reference>
<gene>
    <name type="ordered locus">ABO_0214</name>
</gene>
<dbReference type="EMBL" id="AM286690">
    <property type="protein sequence ID" value="CAL15662.1"/>
    <property type="molecule type" value="Genomic_DNA"/>
</dbReference>
<dbReference type="SMR" id="Q0VT58"/>
<dbReference type="STRING" id="393595.ABO_0214"/>
<dbReference type="KEGG" id="abo:ABO_0214"/>
<dbReference type="eggNOG" id="COG2003">
    <property type="taxonomic scope" value="Bacteria"/>
</dbReference>
<dbReference type="HOGENOM" id="CLU_073529_0_0_6"/>
<dbReference type="OrthoDB" id="9804482at2"/>
<dbReference type="Proteomes" id="UP000008871">
    <property type="component" value="Chromosome"/>
</dbReference>
<dbReference type="GO" id="GO:0046872">
    <property type="term" value="F:metal ion binding"/>
    <property type="evidence" value="ECO:0007669"/>
    <property type="project" value="UniProtKB-KW"/>
</dbReference>
<dbReference type="GO" id="GO:0008237">
    <property type="term" value="F:metallopeptidase activity"/>
    <property type="evidence" value="ECO:0007669"/>
    <property type="project" value="UniProtKB-KW"/>
</dbReference>
<dbReference type="GO" id="GO:0006508">
    <property type="term" value="P:proteolysis"/>
    <property type="evidence" value="ECO:0007669"/>
    <property type="project" value="UniProtKB-KW"/>
</dbReference>
<dbReference type="CDD" id="cd08071">
    <property type="entry name" value="MPN_DUF2466"/>
    <property type="match status" value="1"/>
</dbReference>
<dbReference type="Gene3D" id="3.40.140.10">
    <property type="entry name" value="Cytidine Deaminase, domain 2"/>
    <property type="match status" value="1"/>
</dbReference>
<dbReference type="InterPro" id="IPR037518">
    <property type="entry name" value="MPN"/>
</dbReference>
<dbReference type="InterPro" id="IPR025657">
    <property type="entry name" value="RadC_JAB"/>
</dbReference>
<dbReference type="InterPro" id="IPR001405">
    <property type="entry name" value="UPF0758"/>
</dbReference>
<dbReference type="InterPro" id="IPR020891">
    <property type="entry name" value="UPF0758_CS"/>
</dbReference>
<dbReference type="InterPro" id="IPR046778">
    <property type="entry name" value="UPF0758_N"/>
</dbReference>
<dbReference type="NCBIfam" id="NF000642">
    <property type="entry name" value="PRK00024.1"/>
    <property type="match status" value="1"/>
</dbReference>
<dbReference type="NCBIfam" id="TIGR00608">
    <property type="entry name" value="radc"/>
    <property type="match status" value="1"/>
</dbReference>
<dbReference type="PANTHER" id="PTHR30471">
    <property type="entry name" value="DNA REPAIR PROTEIN RADC"/>
    <property type="match status" value="1"/>
</dbReference>
<dbReference type="PANTHER" id="PTHR30471:SF3">
    <property type="entry name" value="UPF0758 PROTEIN YEES-RELATED"/>
    <property type="match status" value="1"/>
</dbReference>
<dbReference type="Pfam" id="PF04002">
    <property type="entry name" value="RadC"/>
    <property type="match status" value="1"/>
</dbReference>
<dbReference type="Pfam" id="PF20582">
    <property type="entry name" value="UPF0758_N"/>
    <property type="match status" value="1"/>
</dbReference>
<dbReference type="SUPFAM" id="SSF102712">
    <property type="entry name" value="JAB1/MPN domain"/>
    <property type="match status" value="1"/>
</dbReference>
<dbReference type="PROSITE" id="PS50249">
    <property type="entry name" value="MPN"/>
    <property type="match status" value="1"/>
</dbReference>
<dbReference type="PROSITE" id="PS01302">
    <property type="entry name" value="UPF0758"/>
    <property type="match status" value="1"/>
</dbReference>
<feature type="chain" id="PRO_1000001642" description="UPF0758 protein ABO_0214">
    <location>
        <begin position="1"/>
        <end position="224"/>
    </location>
</feature>
<feature type="domain" description="MPN" evidence="1">
    <location>
        <begin position="102"/>
        <end position="224"/>
    </location>
</feature>
<feature type="short sequence motif" description="JAMM motif" evidence="1">
    <location>
        <begin position="173"/>
        <end position="186"/>
    </location>
</feature>
<feature type="binding site" evidence="1">
    <location>
        <position position="173"/>
    </location>
    <ligand>
        <name>Zn(2+)</name>
        <dbReference type="ChEBI" id="CHEBI:29105"/>
        <note>catalytic</note>
    </ligand>
</feature>
<feature type="binding site" evidence="1">
    <location>
        <position position="175"/>
    </location>
    <ligand>
        <name>Zn(2+)</name>
        <dbReference type="ChEBI" id="CHEBI:29105"/>
        <note>catalytic</note>
    </ligand>
</feature>
<feature type="binding site" evidence="1">
    <location>
        <position position="186"/>
    </location>
    <ligand>
        <name>Zn(2+)</name>
        <dbReference type="ChEBI" id="CHEBI:29105"/>
        <note>catalytic</note>
    </ligand>
</feature>
<evidence type="ECO:0000255" key="1">
    <source>
        <dbReference type="PROSITE-ProRule" id="PRU01182"/>
    </source>
</evidence>
<evidence type="ECO:0000305" key="2"/>
<keyword id="KW-0378">Hydrolase</keyword>
<keyword id="KW-0479">Metal-binding</keyword>
<keyword id="KW-0482">Metalloprotease</keyword>
<keyword id="KW-0645">Protease</keyword>
<keyword id="KW-1185">Reference proteome</keyword>
<keyword id="KW-0862">Zinc</keyword>
<name>Y214_ALCBS</name>
<organism>
    <name type="scientific">Alcanivorax borkumensis (strain ATCC 700651 / DSM 11573 / NCIMB 13689 / SK2)</name>
    <dbReference type="NCBI Taxonomy" id="393595"/>
    <lineage>
        <taxon>Bacteria</taxon>
        <taxon>Pseudomonadati</taxon>
        <taxon>Pseudomonadota</taxon>
        <taxon>Gammaproteobacteria</taxon>
        <taxon>Oceanospirillales</taxon>
        <taxon>Alcanivoracaceae</taxon>
        <taxon>Alcanivorax</taxon>
    </lineage>
</organism>
<proteinExistence type="inferred from homology"/>
<accession>Q0VT58</accession>
<protein>
    <recommendedName>
        <fullName>UPF0758 protein ABO_0214</fullName>
    </recommendedName>
</protein>